<comment type="function">
    <text evidence="2">Probable ubiquitin-protein ligase mainly involved in pre-mRNA splicing and DNA repair. Core component of the Prp19 complex/PRP19C/Nineteen complex/NTC which is part of the spliceosome and participates in its assembly, its remodeling and is required for its activity.</text>
</comment>
<comment type="catalytic activity">
    <reaction evidence="2">
        <text>S-ubiquitinyl-[E2 ubiquitin-conjugating enzyme]-L-cysteine + [acceptor protein]-L-lysine = [E2 ubiquitin-conjugating enzyme]-L-cysteine + N(6)-ubiquitinyl-[acceptor protein]-L-lysine.</text>
        <dbReference type="EC" id="2.3.2.27"/>
    </reaction>
</comment>
<comment type="pathway">
    <text evidence="2">Protein modification; protein ubiquitination.</text>
</comment>
<comment type="subunit">
    <text evidence="1 2">Homotetramer. Component of the NTC complex (or PRP19-associated complex) which is associated with the spliceosome.</text>
</comment>
<comment type="subcellular location">
    <subcellularLocation>
        <location evidence="2">Nucleus</location>
    </subcellularLocation>
    <subcellularLocation>
        <location evidence="2">Nucleus</location>
        <location evidence="2">Nucleoplasm</location>
    </subcellularLocation>
</comment>
<comment type="similarity">
    <text evidence="4">Belongs to the WD repeat PRP19 family.</text>
</comment>
<proteinExistence type="inferred from homology"/>
<name>PRP19_DICDI</name>
<protein>
    <recommendedName>
        <fullName evidence="4">Pre-mRNA-processing factor 19</fullName>
        <ecNumber evidence="2">2.3.2.27</ecNumber>
    </recommendedName>
    <alternativeName>
        <fullName>PRP19/PSO4 homolog</fullName>
    </alternativeName>
    <alternativeName>
        <fullName evidence="4">RING-type E3 ubiquitin transferase PRP19</fullName>
    </alternativeName>
</protein>
<gene>
    <name type="primary">prp19</name>
    <name type="ORF">DDB_G0276803</name>
</gene>
<accession>Q7KWK5</accession>
<accession>Q550P2</accession>
<reference key="1">
    <citation type="journal article" date="2002" name="Nature">
        <title>Sequence and analysis of chromosome 2 of Dictyostelium discoideum.</title>
        <authorList>
            <person name="Gloeckner G."/>
            <person name="Eichinger L."/>
            <person name="Szafranski K."/>
            <person name="Pachebat J.A."/>
            <person name="Bankier A.T."/>
            <person name="Dear P.H."/>
            <person name="Lehmann R."/>
            <person name="Baumgart C."/>
            <person name="Parra G."/>
            <person name="Abril J.F."/>
            <person name="Guigo R."/>
            <person name="Kumpf K."/>
            <person name="Tunggal B."/>
            <person name="Cox E.C."/>
            <person name="Quail M.A."/>
            <person name="Platzer M."/>
            <person name="Rosenthal A."/>
            <person name="Noegel A.A."/>
        </authorList>
    </citation>
    <scope>NUCLEOTIDE SEQUENCE [LARGE SCALE GENOMIC DNA]</scope>
    <source>
        <strain>AX4</strain>
    </source>
</reference>
<reference key="2">
    <citation type="journal article" date="2005" name="Nature">
        <title>The genome of the social amoeba Dictyostelium discoideum.</title>
        <authorList>
            <person name="Eichinger L."/>
            <person name="Pachebat J.A."/>
            <person name="Gloeckner G."/>
            <person name="Rajandream M.A."/>
            <person name="Sucgang R."/>
            <person name="Berriman M."/>
            <person name="Song J."/>
            <person name="Olsen R."/>
            <person name="Szafranski K."/>
            <person name="Xu Q."/>
            <person name="Tunggal B."/>
            <person name="Kummerfeld S."/>
            <person name="Madera M."/>
            <person name="Konfortov B.A."/>
            <person name="Rivero F."/>
            <person name="Bankier A.T."/>
            <person name="Lehmann R."/>
            <person name="Hamlin N."/>
            <person name="Davies R."/>
            <person name="Gaudet P."/>
            <person name="Fey P."/>
            <person name="Pilcher K."/>
            <person name="Chen G."/>
            <person name="Saunders D."/>
            <person name="Sodergren E.J."/>
            <person name="Davis P."/>
            <person name="Kerhornou A."/>
            <person name="Nie X."/>
            <person name="Hall N."/>
            <person name="Anjard C."/>
            <person name="Hemphill L."/>
            <person name="Bason N."/>
            <person name="Farbrother P."/>
            <person name="Desany B."/>
            <person name="Just E."/>
            <person name="Morio T."/>
            <person name="Rost R."/>
            <person name="Churcher C.M."/>
            <person name="Cooper J."/>
            <person name="Haydock S."/>
            <person name="van Driessche N."/>
            <person name="Cronin A."/>
            <person name="Goodhead I."/>
            <person name="Muzny D.M."/>
            <person name="Mourier T."/>
            <person name="Pain A."/>
            <person name="Lu M."/>
            <person name="Harper D."/>
            <person name="Lindsay R."/>
            <person name="Hauser H."/>
            <person name="James K.D."/>
            <person name="Quiles M."/>
            <person name="Madan Babu M."/>
            <person name="Saito T."/>
            <person name="Buchrieser C."/>
            <person name="Wardroper A."/>
            <person name="Felder M."/>
            <person name="Thangavelu M."/>
            <person name="Johnson D."/>
            <person name="Knights A."/>
            <person name="Loulseged H."/>
            <person name="Mungall K.L."/>
            <person name="Oliver K."/>
            <person name="Price C."/>
            <person name="Quail M.A."/>
            <person name="Urushihara H."/>
            <person name="Hernandez J."/>
            <person name="Rabbinowitsch E."/>
            <person name="Steffen D."/>
            <person name="Sanders M."/>
            <person name="Ma J."/>
            <person name="Kohara Y."/>
            <person name="Sharp S."/>
            <person name="Simmonds M.N."/>
            <person name="Spiegler S."/>
            <person name="Tivey A."/>
            <person name="Sugano S."/>
            <person name="White B."/>
            <person name="Walker D."/>
            <person name="Woodward J.R."/>
            <person name="Winckler T."/>
            <person name="Tanaka Y."/>
            <person name="Shaulsky G."/>
            <person name="Schleicher M."/>
            <person name="Weinstock G.M."/>
            <person name="Rosenthal A."/>
            <person name="Cox E.C."/>
            <person name="Chisholm R.L."/>
            <person name="Gibbs R.A."/>
            <person name="Loomis W.F."/>
            <person name="Platzer M."/>
            <person name="Kay R.R."/>
            <person name="Williams J.G."/>
            <person name="Dear P.H."/>
            <person name="Noegel A.A."/>
            <person name="Barrell B.G."/>
            <person name="Kuspa A."/>
        </authorList>
    </citation>
    <scope>NUCLEOTIDE SEQUENCE [LARGE SCALE GENOMIC DNA]</scope>
    <source>
        <strain>AX4</strain>
    </source>
</reference>
<evidence type="ECO:0000250" key="1">
    <source>
        <dbReference type="UniProtKB" id="P32523"/>
    </source>
</evidence>
<evidence type="ECO:0000250" key="2">
    <source>
        <dbReference type="UniProtKB" id="Q9UMS4"/>
    </source>
</evidence>
<evidence type="ECO:0000256" key="3">
    <source>
        <dbReference type="SAM" id="MobiDB-lite"/>
    </source>
</evidence>
<evidence type="ECO:0000305" key="4"/>
<sequence length="514" mass="56811">MICAISGSTTEEPVISTKTGNVYEKRLIEKYIDTNGKEPTTGEPLGLSDLITVKIGKTVKPRPTTATSIPSMLQLFQNEWDSLMLETFTLKQQHETVRQELAHSMYQYDAACRVIARLVKERDAARSALANARNIVQQQQQQTNNNNNNNNNKDVEMSSASTPSSSEDNLLDSTIYKRIAEKSEELIKTRKERTHQSLAEPDAIKQFKVSANVETDCQIKSLEVNSQDNNLIAMGGINGNVYVYSRETNELCTAIKGTSSAPINKVLFAPNNTIVSAGSDAVIRVVKGGESPSKKTYTQYKSTYQFAHKASVTDISLHVLGDYIISSSLDKSLNMYDIVNGTHLTSFGQSQQLCYTSVAFHPDGMFFAAGTQNGVVKIFDLKSKVNSFNFQGLSTAVNCISFSENGYYLTAADNNTVKLFDLRKAATKNSPDIQTITLDNQQIKSINFDYSSQYLGVASSNQINLYSCKSKQKPPISSIHSIDSDCLDFKWARPNSNFFVTSSSSKNIVNIFSN</sequence>
<feature type="chain" id="PRO_0000328058" description="Pre-mRNA-processing factor 19">
    <location>
        <begin position="1"/>
        <end position="514"/>
    </location>
</feature>
<feature type="domain" description="U-box">
    <location>
        <begin position="1"/>
        <end position="70"/>
    </location>
</feature>
<feature type="repeat" description="WD 1">
    <location>
        <begin position="214"/>
        <end position="254"/>
    </location>
</feature>
<feature type="repeat" description="WD 2">
    <location>
        <begin position="258"/>
        <end position="296"/>
    </location>
</feature>
<feature type="repeat" description="WD 3">
    <location>
        <begin position="307"/>
        <end position="346"/>
    </location>
</feature>
<feature type="repeat" description="WD 4">
    <location>
        <begin position="348"/>
        <end position="389"/>
    </location>
</feature>
<feature type="repeat" description="WD 5">
    <location>
        <begin position="392"/>
        <end position="430"/>
    </location>
</feature>
<feature type="repeat" description="WD 6">
    <location>
        <begin position="438"/>
        <end position="476"/>
    </location>
</feature>
<feature type="repeat" description="WD 7">
    <location>
        <begin position="481"/>
        <end position="514"/>
    </location>
</feature>
<feature type="region of interest" description="Disordered" evidence="3">
    <location>
        <begin position="137"/>
        <end position="169"/>
    </location>
</feature>
<feature type="compositionally biased region" description="Low complexity" evidence="3">
    <location>
        <begin position="137"/>
        <end position="166"/>
    </location>
</feature>
<dbReference type="EC" id="2.3.2.27" evidence="2"/>
<dbReference type="EMBL" id="AAFI02000019">
    <property type="protein sequence ID" value="EAL68903.1"/>
    <property type="molecule type" value="Genomic_DNA"/>
</dbReference>
<dbReference type="RefSeq" id="XP_642890.1">
    <property type="nucleotide sequence ID" value="XM_637798.1"/>
</dbReference>
<dbReference type="SMR" id="Q7KWK5"/>
<dbReference type="FunCoup" id="Q7KWK5">
    <property type="interactions" value="1196"/>
</dbReference>
<dbReference type="STRING" id="44689.Q7KWK5"/>
<dbReference type="GlyGen" id="Q7KWK5">
    <property type="glycosylation" value="1 site"/>
</dbReference>
<dbReference type="PaxDb" id="44689-DDB0233121"/>
<dbReference type="EnsemblProtists" id="EAL68903">
    <property type="protein sequence ID" value="EAL68903"/>
    <property type="gene ID" value="DDB_G0276803"/>
</dbReference>
<dbReference type="GeneID" id="8620756"/>
<dbReference type="KEGG" id="ddi:DDB_G0276803"/>
<dbReference type="dictyBase" id="DDB_G0276803">
    <property type="gene designation" value="prp19"/>
</dbReference>
<dbReference type="VEuPathDB" id="AmoebaDB:DDB_G0276803"/>
<dbReference type="eggNOG" id="KOG0289">
    <property type="taxonomic scope" value="Eukaryota"/>
</dbReference>
<dbReference type="HOGENOM" id="CLU_023894_1_0_1"/>
<dbReference type="InParanoid" id="Q7KWK5"/>
<dbReference type="OMA" id="SLDQHWA"/>
<dbReference type="PhylomeDB" id="Q7KWK5"/>
<dbReference type="Reactome" id="R-DDI-6781823">
    <property type="pathway name" value="Formation of TC-NER Pre-Incision Complex"/>
</dbReference>
<dbReference type="Reactome" id="R-DDI-6782135">
    <property type="pathway name" value="Dual incision in TC-NER"/>
</dbReference>
<dbReference type="Reactome" id="R-DDI-6782210">
    <property type="pathway name" value="Gap-filling DNA repair synthesis and ligation in TC-NER"/>
</dbReference>
<dbReference type="Reactome" id="R-DDI-72163">
    <property type="pathway name" value="mRNA Splicing - Major Pathway"/>
</dbReference>
<dbReference type="UniPathway" id="UPA00143"/>
<dbReference type="PRO" id="PR:Q7KWK5"/>
<dbReference type="Proteomes" id="UP000002195">
    <property type="component" value="Chromosome 2"/>
</dbReference>
<dbReference type="GO" id="GO:0005737">
    <property type="term" value="C:cytoplasm"/>
    <property type="evidence" value="ECO:0000318"/>
    <property type="project" value="GO_Central"/>
</dbReference>
<dbReference type="GO" id="GO:0005654">
    <property type="term" value="C:nucleoplasm"/>
    <property type="evidence" value="ECO:0007669"/>
    <property type="project" value="UniProtKB-SubCell"/>
</dbReference>
<dbReference type="GO" id="GO:0005634">
    <property type="term" value="C:nucleus"/>
    <property type="evidence" value="ECO:0000250"/>
    <property type="project" value="UniProtKB"/>
</dbReference>
<dbReference type="GO" id="GO:0000974">
    <property type="term" value="C:Prp19 complex"/>
    <property type="evidence" value="ECO:0000318"/>
    <property type="project" value="GO_Central"/>
</dbReference>
<dbReference type="GO" id="GO:0005681">
    <property type="term" value="C:spliceosomal complex"/>
    <property type="evidence" value="ECO:0000250"/>
    <property type="project" value="dictyBase"/>
</dbReference>
<dbReference type="GO" id="GO:0071006">
    <property type="term" value="C:U2-type catalytic step 1 spliceosome"/>
    <property type="evidence" value="ECO:0000318"/>
    <property type="project" value="GO_Central"/>
</dbReference>
<dbReference type="GO" id="GO:0061630">
    <property type="term" value="F:ubiquitin protein ligase activity"/>
    <property type="evidence" value="ECO:0000250"/>
    <property type="project" value="UniProtKB"/>
</dbReference>
<dbReference type="GO" id="GO:0004842">
    <property type="term" value="F:ubiquitin-protein transferase activity"/>
    <property type="evidence" value="ECO:0000318"/>
    <property type="project" value="GO_Central"/>
</dbReference>
<dbReference type="GO" id="GO:0006281">
    <property type="term" value="P:DNA repair"/>
    <property type="evidence" value="ECO:0007669"/>
    <property type="project" value="UniProtKB-KW"/>
</dbReference>
<dbReference type="GO" id="GO:0000398">
    <property type="term" value="P:mRNA splicing, via spliceosome"/>
    <property type="evidence" value="ECO:0000318"/>
    <property type="project" value="GO_Central"/>
</dbReference>
<dbReference type="GO" id="GO:0070534">
    <property type="term" value="P:protein K63-linked ubiquitination"/>
    <property type="evidence" value="ECO:0000250"/>
    <property type="project" value="UniProtKB"/>
</dbReference>
<dbReference type="GO" id="GO:0000375">
    <property type="term" value="P:RNA splicing, via transesterification reactions"/>
    <property type="evidence" value="ECO:0000250"/>
    <property type="project" value="dictyBase"/>
</dbReference>
<dbReference type="CDD" id="cd16656">
    <property type="entry name" value="RING-Ubox_PRP19"/>
    <property type="match status" value="1"/>
</dbReference>
<dbReference type="FunFam" id="3.30.40.10:FF:000027">
    <property type="entry name" value="Pre-mRNA-processing factor 19, putative"/>
    <property type="match status" value="1"/>
</dbReference>
<dbReference type="Gene3D" id="2.130.10.10">
    <property type="entry name" value="YVTN repeat-like/Quinoprotein amine dehydrogenase"/>
    <property type="match status" value="1"/>
</dbReference>
<dbReference type="Gene3D" id="3.30.40.10">
    <property type="entry name" value="Zinc/RING finger domain, C3HC4 (zinc finger)"/>
    <property type="match status" value="1"/>
</dbReference>
<dbReference type="InterPro" id="IPR024977">
    <property type="entry name" value="Apc4-like_WD40_dom"/>
</dbReference>
<dbReference type="InterPro" id="IPR013915">
    <property type="entry name" value="Pre-mRNA_splic_Prp19_cc"/>
</dbReference>
<dbReference type="InterPro" id="IPR038959">
    <property type="entry name" value="Prp19"/>
</dbReference>
<dbReference type="InterPro" id="IPR055340">
    <property type="entry name" value="RING-Ubox_PRP19"/>
</dbReference>
<dbReference type="InterPro" id="IPR003613">
    <property type="entry name" value="Ubox_domain"/>
</dbReference>
<dbReference type="InterPro" id="IPR015943">
    <property type="entry name" value="WD40/YVTN_repeat-like_dom_sf"/>
</dbReference>
<dbReference type="InterPro" id="IPR036322">
    <property type="entry name" value="WD40_repeat_dom_sf"/>
</dbReference>
<dbReference type="InterPro" id="IPR001680">
    <property type="entry name" value="WD40_rpt"/>
</dbReference>
<dbReference type="InterPro" id="IPR013083">
    <property type="entry name" value="Znf_RING/FYVE/PHD"/>
</dbReference>
<dbReference type="PANTHER" id="PTHR43995">
    <property type="entry name" value="PRE-MRNA-PROCESSING FACTOR 19"/>
    <property type="match status" value="1"/>
</dbReference>
<dbReference type="PANTHER" id="PTHR43995:SF1">
    <property type="entry name" value="PRE-MRNA-PROCESSING FACTOR 19"/>
    <property type="match status" value="1"/>
</dbReference>
<dbReference type="Pfam" id="PF12894">
    <property type="entry name" value="ANAPC4_WD40"/>
    <property type="match status" value="1"/>
</dbReference>
<dbReference type="Pfam" id="PF08606">
    <property type="entry name" value="Prp19"/>
    <property type="match status" value="1"/>
</dbReference>
<dbReference type="Pfam" id="PF00400">
    <property type="entry name" value="WD40"/>
    <property type="match status" value="2"/>
</dbReference>
<dbReference type="SMART" id="SM00504">
    <property type="entry name" value="Ubox"/>
    <property type="match status" value="1"/>
</dbReference>
<dbReference type="SMART" id="SM00320">
    <property type="entry name" value="WD40"/>
    <property type="match status" value="7"/>
</dbReference>
<dbReference type="SUPFAM" id="SSF57850">
    <property type="entry name" value="RING/U-box"/>
    <property type="match status" value="1"/>
</dbReference>
<dbReference type="SUPFAM" id="SSF50978">
    <property type="entry name" value="WD40 repeat-like"/>
    <property type="match status" value="1"/>
</dbReference>
<dbReference type="PROSITE" id="PS51698">
    <property type="entry name" value="U_BOX"/>
    <property type="match status" value="1"/>
</dbReference>
<dbReference type="PROSITE" id="PS50082">
    <property type="entry name" value="WD_REPEATS_2"/>
    <property type="match status" value="1"/>
</dbReference>
<dbReference type="PROSITE" id="PS50294">
    <property type="entry name" value="WD_REPEATS_REGION"/>
    <property type="match status" value="1"/>
</dbReference>
<keyword id="KW-0227">DNA damage</keyword>
<keyword id="KW-0234">DNA repair</keyword>
<keyword id="KW-0507">mRNA processing</keyword>
<keyword id="KW-0508">mRNA splicing</keyword>
<keyword id="KW-0539">Nucleus</keyword>
<keyword id="KW-1185">Reference proteome</keyword>
<keyword id="KW-0677">Repeat</keyword>
<keyword id="KW-0747">Spliceosome</keyword>
<keyword id="KW-0808">Transferase</keyword>
<keyword id="KW-0833">Ubl conjugation pathway</keyword>
<keyword id="KW-0853">WD repeat</keyword>
<organism>
    <name type="scientific">Dictyostelium discoideum</name>
    <name type="common">Social amoeba</name>
    <dbReference type="NCBI Taxonomy" id="44689"/>
    <lineage>
        <taxon>Eukaryota</taxon>
        <taxon>Amoebozoa</taxon>
        <taxon>Evosea</taxon>
        <taxon>Eumycetozoa</taxon>
        <taxon>Dictyostelia</taxon>
        <taxon>Dictyosteliales</taxon>
        <taxon>Dictyosteliaceae</taxon>
        <taxon>Dictyostelium</taxon>
    </lineage>
</organism>